<comment type="function">
    <text evidence="1">Binds to 23S rRNA. Forms part of two intersubunit bridges in the 70S ribosome.</text>
</comment>
<comment type="subunit">
    <text evidence="1">Part of the 50S ribosomal subunit. Forms a cluster with proteins L3 and L19. In the 70S ribosome, L14 and L19 interact and together make contacts with the 16S rRNA in bridges B5 and B8.</text>
</comment>
<comment type="similarity">
    <text evidence="1">Belongs to the universal ribosomal protein uL14 family.</text>
</comment>
<keyword id="KW-1185">Reference proteome</keyword>
<keyword id="KW-0687">Ribonucleoprotein</keyword>
<keyword id="KW-0689">Ribosomal protein</keyword>
<keyword id="KW-0694">RNA-binding</keyword>
<keyword id="KW-0699">rRNA-binding</keyword>
<sequence>MIQEQTMLNVADNSGARRVMCIKVLGGSHRRYAGVGDIIKITIKEAIPRGKVKKGDVLKAVVVRTKKGVRRPDGSVIRFDGNACVILNNNSEQPIGTRIFGPVTRELRNEKFMKIISLAPEVL</sequence>
<name>RL14_SALAR</name>
<reference key="1">
    <citation type="submission" date="2007-11" db="EMBL/GenBank/DDBJ databases">
        <authorList>
            <consortium name="The Salmonella enterica serovar Arizonae Genome Sequencing Project"/>
            <person name="McClelland M."/>
            <person name="Sanderson E.K."/>
            <person name="Porwollik S."/>
            <person name="Spieth J."/>
            <person name="Clifton W.S."/>
            <person name="Fulton R."/>
            <person name="Chunyan W."/>
            <person name="Wollam A."/>
            <person name="Shah N."/>
            <person name="Pepin K."/>
            <person name="Bhonagiri V."/>
            <person name="Nash W."/>
            <person name="Johnson M."/>
            <person name="Thiruvilangam P."/>
            <person name="Wilson R."/>
        </authorList>
    </citation>
    <scope>NUCLEOTIDE SEQUENCE [LARGE SCALE GENOMIC DNA]</scope>
    <source>
        <strain>ATCC BAA-731 / CDC346-86 / RSK2980</strain>
    </source>
</reference>
<feature type="chain" id="PRO_1000087144" description="Large ribosomal subunit protein uL14">
    <location>
        <begin position="1"/>
        <end position="123"/>
    </location>
</feature>
<accession>A9MN58</accession>
<proteinExistence type="inferred from homology"/>
<organism>
    <name type="scientific">Salmonella arizonae (strain ATCC BAA-731 / CDC346-86 / RSK2980)</name>
    <dbReference type="NCBI Taxonomy" id="41514"/>
    <lineage>
        <taxon>Bacteria</taxon>
        <taxon>Pseudomonadati</taxon>
        <taxon>Pseudomonadota</taxon>
        <taxon>Gammaproteobacteria</taxon>
        <taxon>Enterobacterales</taxon>
        <taxon>Enterobacteriaceae</taxon>
        <taxon>Salmonella</taxon>
    </lineage>
</organism>
<dbReference type="EMBL" id="CP000880">
    <property type="protein sequence ID" value="ABX23988.1"/>
    <property type="molecule type" value="Genomic_DNA"/>
</dbReference>
<dbReference type="SMR" id="A9MN58"/>
<dbReference type="STRING" id="41514.SARI_04199"/>
<dbReference type="KEGG" id="ses:SARI_04199"/>
<dbReference type="HOGENOM" id="CLU_095071_2_1_6"/>
<dbReference type="Proteomes" id="UP000002084">
    <property type="component" value="Chromosome"/>
</dbReference>
<dbReference type="GO" id="GO:0022625">
    <property type="term" value="C:cytosolic large ribosomal subunit"/>
    <property type="evidence" value="ECO:0007669"/>
    <property type="project" value="TreeGrafter"/>
</dbReference>
<dbReference type="GO" id="GO:0070180">
    <property type="term" value="F:large ribosomal subunit rRNA binding"/>
    <property type="evidence" value="ECO:0007669"/>
    <property type="project" value="TreeGrafter"/>
</dbReference>
<dbReference type="GO" id="GO:0003735">
    <property type="term" value="F:structural constituent of ribosome"/>
    <property type="evidence" value="ECO:0007669"/>
    <property type="project" value="InterPro"/>
</dbReference>
<dbReference type="GO" id="GO:0006412">
    <property type="term" value="P:translation"/>
    <property type="evidence" value="ECO:0007669"/>
    <property type="project" value="UniProtKB-UniRule"/>
</dbReference>
<dbReference type="CDD" id="cd00337">
    <property type="entry name" value="Ribosomal_uL14"/>
    <property type="match status" value="1"/>
</dbReference>
<dbReference type="FunFam" id="2.40.150.20:FF:000001">
    <property type="entry name" value="50S ribosomal protein L14"/>
    <property type="match status" value="1"/>
</dbReference>
<dbReference type="Gene3D" id="2.40.150.20">
    <property type="entry name" value="Ribosomal protein L14"/>
    <property type="match status" value="1"/>
</dbReference>
<dbReference type="HAMAP" id="MF_01367">
    <property type="entry name" value="Ribosomal_uL14"/>
    <property type="match status" value="1"/>
</dbReference>
<dbReference type="InterPro" id="IPR000218">
    <property type="entry name" value="Ribosomal_uL14"/>
</dbReference>
<dbReference type="InterPro" id="IPR005745">
    <property type="entry name" value="Ribosomal_uL14_bac-type"/>
</dbReference>
<dbReference type="InterPro" id="IPR019972">
    <property type="entry name" value="Ribosomal_uL14_CS"/>
</dbReference>
<dbReference type="InterPro" id="IPR036853">
    <property type="entry name" value="Ribosomal_uL14_sf"/>
</dbReference>
<dbReference type="NCBIfam" id="TIGR01067">
    <property type="entry name" value="rplN_bact"/>
    <property type="match status" value="1"/>
</dbReference>
<dbReference type="PANTHER" id="PTHR11761">
    <property type="entry name" value="50S/60S RIBOSOMAL PROTEIN L14/L23"/>
    <property type="match status" value="1"/>
</dbReference>
<dbReference type="PANTHER" id="PTHR11761:SF3">
    <property type="entry name" value="LARGE RIBOSOMAL SUBUNIT PROTEIN UL14M"/>
    <property type="match status" value="1"/>
</dbReference>
<dbReference type="Pfam" id="PF00238">
    <property type="entry name" value="Ribosomal_L14"/>
    <property type="match status" value="1"/>
</dbReference>
<dbReference type="SMART" id="SM01374">
    <property type="entry name" value="Ribosomal_L14"/>
    <property type="match status" value="1"/>
</dbReference>
<dbReference type="SUPFAM" id="SSF50193">
    <property type="entry name" value="Ribosomal protein L14"/>
    <property type="match status" value="1"/>
</dbReference>
<dbReference type="PROSITE" id="PS00049">
    <property type="entry name" value="RIBOSOMAL_L14"/>
    <property type="match status" value="1"/>
</dbReference>
<evidence type="ECO:0000255" key="1">
    <source>
        <dbReference type="HAMAP-Rule" id="MF_01367"/>
    </source>
</evidence>
<evidence type="ECO:0000305" key="2"/>
<gene>
    <name evidence="1" type="primary">rplN</name>
    <name type="ordered locus">SARI_04199</name>
</gene>
<protein>
    <recommendedName>
        <fullName evidence="1">Large ribosomal subunit protein uL14</fullName>
    </recommendedName>
    <alternativeName>
        <fullName evidence="2">50S ribosomal protein L14</fullName>
    </alternativeName>
</protein>